<keyword id="KW-1003">Cell membrane</keyword>
<keyword id="KW-1284">Encapsulin nanocompartment</keyword>
<keyword id="KW-0472">Membrane</keyword>
<keyword id="KW-1185">Reference proteome</keyword>
<proteinExistence type="evidence at protein level"/>
<feature type="chain" id="PRO_0000455320" description="Type 2A encapsulin shell protein">
    <location>
        <begin position="1"/>
        <end position="307"/>
    </location>
</feature>
<reference key="1">
    <citation type="journal article" date="2005" name="Proc. Natl. Acad. Sci. U.S.A.">
        <title>The complete genome sequence of Mycobacterium avium subspecies paratuberculosis.</title>
        <authorList>
            <person name="Li L."/>
            <person name="Bannantine J.P."/>
            <person name="Zhang Q."/>
            <person name="Amonsin A."/>
            <person name="May B.J."/>
            <person name="Alt D."/>
            <person name="Banerji N."/>
            <person name="Kanjilal S."/>
            <person name="Kapur V."/>
        </authorList>
    </citation>
    <scope>NUCLEOTIDE SEQUENCE [LARGE SCALE GENOMIC DNA]</scope>
    <source>
        <strain>ATCC BAA-968 / K-10</strain>
    </source>
</reference>
<reference key="2">
    <citation type="journal article" date="2001" name="J. Med. Microbiol.">
        <title>Identification of two Mycobacterium avium subspecies paratuberculosis gene products differentially recognised by sera from rabbits immunised with live mycobacteria but not heat-killed mycobacteria.</title>
        <authorList>
            <person name="Bannantine J.P."/>
            <person name="Stabel J.R."/>
        </authorList>
    </citation>
    <scope>NUCLEOTIDE SEQUENCE [GENOMIC DNA] OF 13-307</scope>
    <scope>ANTIGENICITY</scope>
    <source>
        <strain>ATCC 19698 / CIP 103963 / DSM 44133 / TMC 807</strain>
    </source>
</reference>
<reference key="3">
    <citation type="journal article" date="2015" name="Vet. Microbiol.">
        <title>Envelope protein complexes of Mycobacterium avium subsp. paratuberculosis and their antigenicity.</title>
        <authorList>
            <person name="Leite F.L."/>
            <person name="Reinhardt T.A."/>
            <person name="Bannantine J.P."/>
            <person name="Stabel J.R."/>
        </authorList>
    </citation>
    <scope>IDENTIFICATION BY MASS SPECTROMETRY</scope>
    <scope>INTERACTION WITH CYD</scope>
    <scope>SUBUNIT</scope>
    <scope>SUBCELLULAR LOCATION</scope>
    <scope>ANTIGENICITY</scope>
    <source>
        <strain>509</strain>
    </source>
</reference>
<reference key="4">
    <citation type="journal article" date="2021" name="Nat. Commun.">
        <title>Large-scale computational discovery and analysis of virus-derived microbial nanocompartments.</title>
        <authorList>
            <person name="Andreas M.P."/>
            <person name="Giessen T.W."/>
        </authorList>
    </citation>
    <scope>CLASSIFICATION</scope>
</reference>
<name>ENCP2_MYCPA</name>
<dbReference type="EMBL" id="AE016958">
    <property type="protein sequence ID" value="AAS04438.1"/>
    <property type="molecule type" value="Genomic_DNA"/>
</dbReference>
<dbReference type="EMBL" id="AF232751">
    <property type="protein sequence ID" value="AAF82073.1"/>
    <property type="molecule type" value="Genomic_DNA"/>
</dbReference>
<dbReference type="RefSeq" id="WP_003872495.1">
    <property type="nucleotide sequence ID" value="NZ_CP106873.1"/>
</dbReference>
<dbReference type="SMR" id="I3NID5"/>
<dbReference type="STRING" id="262316.MAP_2121c"/>
<dbReference type="KEGG" id="mpa:MAP_2121c"/>
<dbReference type="eggNOG" id="COG0664">
    <property type="taxonomic scope" value="Bacteria"/>
</dbReference>
<dbReference type="HOGENOM" id="CLU_089302_0_0_11"/>
<dbReference type="Proteomes" id="UP000000580">
    <property type="component" value="Chromosome"/>
</dbReference>
<dbReference type="GO" id="GO:0140737">
    <property type="term" value="C:encapsulin nanocompartment"/>
    <property type="evidence" value="ECO:0007669"/>
    <property type="project" value="UniProtKB-SubCell"/>
</dbReference>
<dbReference type="GO" id="GO:0005886">
    <property type="term" value="C:plasma membrane"/>
    <property type="evidence" value="ECO:0007669"/>
    <property type="project" value="UniProtKB-SubCell"/>
</dbReference>
<dbReference type="InterPro" id="IPR049822">
    <property type="entry name" value="Encap_f2a"/>
</dbReference>
<dbReference type="InterPro" id="IPR045641">
    <property type="entry name" value="SrpI-like"/>
</dbReference>
<dbReference type="NCBIfam" id="NF041162">
    <property type="entry name" value="encap_f2a"/>
    <property type="match status" value="1"/>
</dbReference>
<dbReference type="Pfam" id="PF19307">
    <property type="entry name" value="SrpI-like"/>
    <property type="match status" value="1"/>
</dbReference>
<dbReference type="SUPFAM" id="SSF56563">
    <property type="entry name" value="Major capsid protein gp5"/>
    <property type="match status" value="1"/>
</dbReference>
<protein>
    <recommendedName>
        <fullName evidence="1">Type 2A encapsulin shell protein</fullName>
    </recommendedName>
    <alternativeName>
        <fullName evidence="4">Major membrane protein-1</fullName>
        <shortName evidence="4">MMP-1</shortName>
    </alternativeName>
</protein>
<evidence type="ECO:0000250" key="1">
    <source>
        <dbReference type="UniProtKB" id="Q55032"/>
    </source>
</evidence>
<evidence type="ECO:0000269" key="2">
    <source>
    </source>
</evidence>
<evidence type="ECO:0000269" key="3">
    <source>
    </source>
</evidence>
<evidence type="ECO:0000303" key="4">
    <source>
    </source>
</evidence>
<evidence type="ECO:0000305" key="5"/>
<evidence type="ECO:0000305" key="6">
    <source>
    </source>
</evidence>
<comment type="function">
    <text evidence="1 6">Shell component of a type 2A encapsulin nanocompartment. Forms encapsulin nanocompartments about 24 nm in diameter from 60 monomers, probably involved in sulfur metabolism (By similarity). Probably encapsulates cysteine desulfurase (Probable).</text>
</comment>
<comment type="subunit">
    <text evidence="1 3">The encapsulin nanocompartment is formed by 60 subunits; monomers form pentamers which assemble to form shells. There are 12 charged pores where the pentamers meet as well as 3-fold axis channels and dimer channels (By similarity). Isolated from bacteria in a complex with cysteine desulfurase (AC Q9KII6) (PubMed:25500374).</text>
</comment>
<comment type="subcellular location">
    <subcellularLocation>
        <location evidence="1">Encapsulin nanocompartment</location>
    </subcellularLocation>
    <subcellularLocation>
        <location evidence="6">Cell membrane</location>
    </subcellularLocation>
</comment>
<comment type="domain">
    <text evidence="1">Has 4 domains; an N-terminal arm not found in the type 1 subfamily, a discontinuous peripheral domain (P), an elongated loop (E) and the discontinuous axial domain (A).</text>
</comment>
<comment type="miscellaneous">
    <text evidence="2 3">Detected in antisera from mice immunized with killed bacteria but not live bacteria (PubMed:11549181). Cattle naturally infected with M.paratuberculosis all have antisera that recognize this protein (PubMed:25500374).</text>
</comment>
<comment type="similarity">
    <text evidence="5">Belongs to the encapsulin family. Family 2A subfamily.</text>
</comment>
<gene>
    <name evidence="5" type="primary">enc2</name>
    <name type="ordered locus">MAP_2121c</name>
</gene>
<sequence>MTSAQNESQALGDLAARQLANATKTVPQLSTITPRWLLHLLNWVPVEAGIYRVNRVVNPEQVAIKAEAGAGSEEPLPQTYVDYETSPREYTLRSISTLVDIHTRVSDLYSSPHDQIAQQLRLTIETIKERQELELINSPEYGLLAQATPEQTIQTLAGAPTPDDLDALITKVWKTPSFFLTHPLGIAAFGREATYRGVPPPVVSLFGAQFITWRGIPLIPSDKVPVEDGKTKFILVRTGEERQGVVGLFQPGLVGEQAPGLSVRFTGINQSAIATYLVTLYTSLAVLTDDALAVLDDVAVDQFHEYK</sequence>
<organism>
    <name type="scientific">Mycolicibacterium paratuberculosis (strain ATCC BAA-968 / K-10)</name>
    <name type="common">Mycobacterium paratuberculosis</name>
    <dbReference type="NCBI Taxonomy" id="262316"/>
    <lineage>
        <taxon>Bacteria</taxon>
        <taxon>Bacillati</taxon>
        <taxon>Actinomycetota</taxon>
        <taxon>Actinomycetes</taxon>
        <taxon>Mycobacteriales</taxon>
        <taxon>Mycobacteriaceae</taxon>
        <taxon>Mycobacterium</taxon>
        <taxon>Mycobacterium avium complex (MAC)</taxon>
    </lineage>
</organism>
<accession>I3NID5</accession>
<accession>Q9KII7</accession>